<name>MCP3_SCHPO</name>
<reference key="1">
    <citation type="journal article" date="2007" name="Cell Div.">
        <title>Meiosis specific coiled-coil proteins in Shizosaccharomyces pombe.</title>
        <authorList>
            <person name="Ohtaka A."/>
            <person name="Saito T.T."/>
            <person name="Okuzaki D."/>
            <person name="Nojima H."/>
        </authorList>
    </citation>
    <scope>NUCLEOTIDE SEQUENCE [GENOMIC DNA]</scope>
</reference>
<reference key="2">
    <citation type="journal article" date="2002" name="Nature">
        <title>The genome sequence of Schizosaccharomyces pombe.</title>
        <authorList>
            <person name="Wood V."/>
            <person name="Gwilliam R."/>
            <person name="Rajandream M.A."/>
            <person name="Lyne M.H."/>
            <person name="Lyne R."/>
            <person name="Stewart A."/>
            <person name="Sgouros J.G."/>
            <person name="Peat N."/>
            <person name="Hayles J."/>
            <person name="Baker S.G."/>
            <person name="Basham D."/>
            <person name="Bowman S."/>
            <person name="Brooks K."/>
            <person name="Brown D."/>
            <person name="Brown S."/>
            <person name="Chillingworth T."/>
            <person name="Churcher C.M."/>
            <person name="Collins M."/>
            <person name="Connor R."/>
            <person name="Cronin A."/>
            <person name="Davis P."/>
            <person name="Feltwell T."/>
            <person name="Fraser A."/>
            <person name="Gentles S."/>
            <person name="Goble A."/>
            <person name="Hamlin N."/>
            <person name="Harris D.E."/>
            <person name="Hidalgo J."/>
            <person name="Hodgson G."/>
            <person name="Holroyd S."/>
            <person name="Hornsby T."/>
            <person name="Howarth S."/>
            <person name="Huckle E.J."/>
            <person name="Hunt S."/>
            <person name="Jagels K."/>
            <person name="James K.D."/>
            <person name="Jones L."/>
            <person name="Jones M."/>
            <person name="Leather S."/>
            <person name="McDonald S."/>
            <person name="McLean J."/>
            <person name="Mooney P."/>
            <person name="Moule S."/>
            <person name="Mungall K.L."/>
            <person name="Murphy L.D."/>
            <person name="Niblett D."/>
            <person name="Odell C."/>
            <person name="Oliver K."/>
            <person name="O'Neil S."/>
            <person name="Pearson D."/>
            <person name="Quail M.A."/>
            <person name="Rabbinowitsch E."/>
            <person name="Rutherford K.M."/>
            <person name="Rutter S."/>
            <person name="Saunders D."/>
            <person name="Seeger K."/>
            <person name="Sharp S."/>
            <person name="Skelton J."/>
            <person name="Simmonds M.N."/>
            <person name="Squares R."/>
            <person name="Squares S."/>
            <person name="Stevens K."/>
            <person name="Taylor K."/>
            <person name="Taylor R.G."/>
            <person name="Tivey A."/>
            <person name="Walsh S.V."/>
            <person name="Warren T."/>
            <person name="Whitehead S."/>
            <person name="Woodward J.R."/>
            <person name="Volckaert G."/>
            <person name="Aert R."/>
            <person name="Robben J."/>
            <person name="Grymonprez B."/>
            <person name="Weltjens I."/>
            <person name="Vanstreels E."/>
            <person name="Rieger M."/>
            <person name="Schaefer M."/>
            <person name="Mueller-Auer S."/>
            <person name="Gabel C."/>
            <person name="Fuchs M."/>
            <person name="Duesterhoeft A."/>
            <person name="Fritzc C."/>
            <person name="Holzer E."/>
            <person name="Moestl D."/>
            <person name="Hilbert H."/>
            <person name="Borzym K."/>
            <person name="Langer I."/>
            <person name="Beck A."/>
            <person name="Lehrach H."/>
            <person name="Reinhardt R."/>
            <person name="Pohl T.M."/>
            <person name="Eger P."/>
            <person name="Zimmermann W."/>
            <person name="Wedler H."/>
            <person name="Wambutt R."/>
            <person name="Purnelle B."/>
            <person name="Goffeau A."/>
            <person name="Cadieu E."/>
            <person name="Dreano S."/>
            <person name="Gloux S."/>
            <person name="Lelaure V."/>
            <person name="Mottier S."/>
            <person name="Galibert F."/>
            <person name="Aves S.J."/>
            <person name="Xiang Z."/>
            <person name="Hunt C."/>
            <person name="Moore K."/>
            <person name="Hurst S.M."/>
            <person name="Lucas M."/>
            <person name="Rochet M."/>
            <person name="Gaillardin C."/>
            <person name="Tallada V.A."/>
            <person name="Garzon A."/>
            <person name="Thode G."/>
            <person name="Daga R.R."/>
            <person name="Cruzado L."/>
            <person name="Jimenez J."/>
            <person name="Sanchez M."/>
            <person name="del Rey F."/>
            <person name="Benito J."/>
            <person name="Dominguez A."/>
            <person name="Revuelta J.L."/>
            <person name="Moreno S."/>
            <person name="Armstrong J."/>
            <person name="Forsburg S.L."/>
            <person name="Cerutti L."/>
            <person name="Lowe T."/>
            <person name="McCombie W.R."/>
            <person name="Paulsen I."/>
            <person name="Potashkin J."/>
            <person name="Shpakovski G.V."/>
            <person name="Ussery D."/>
            <person name="Barrell B.G."/>
            <person name="Nurse P."/>
        </authorList>
    </citation>
    <scope>NUCLEOTIDE SEQUENCE [LARGE SCALE GENOMIC DNA]</scope>
    <source>
        <strain>972 / ATCC 24843</strain>
    </source>
</reference>
<reference key="3">
    <citation type="journal article" date="2005" name="Curr. Biol.">
        <title>A large-scale screen in S. pombe identifies seven novel genes required for critical meiotic events.</title>
        <authorList>
            <person name="Martin-Castellanos C."/>
            <person name="Blanco M."/>
            <person name="Rozalen A.E."/>
            <person name="Perez-Hidalgo L."/>
            <person name="Garcia A.I."/>
            <person name="Conde F."/>
            <person name="Mata J."/>
            <person name="Ellermeier C."/>
            <person name="Davis L."/>
            <person name="San-Segundo P."/>
            <person name="Smith G.R."/>
            <person name="Moreno S."/>
        </authorList>
    </citation>
    <scope>FUNCTION IN MEIOSIS</scope>
</reference>
<reference key="4">
    <citation type="journal article" date="2006" name="Nat. Biotechnol.">
        <title>ORFeome cloning and global analysis of protein localization in the fission yeast Schizosaccharomyces pombe.</title>
        <authorList>
            <person name="Matsuyama A."/>
            <person name="Arai R."/>
            <person name="Yashiroda Y."/>
            <person name="Shirai A."/>
            <person name="Kamata A."/>
            <person name="Sekido S."/>
            <person name="Kobayashi Y."/>
            <person name="Hashimoto A."/>
            <person name="Hamamoto M."/>
            <person name="Hiraoka Y."/>
            <person name="Horinouchi S."/>
            <person name="Yoshida M."/>
        </authorList>
    </citation>
    <scope>SUBCELLULAR LOCATION [LARGE SCALE ANALYSIS]</scope>
</reference>
<accession>Q9UTR7</accession>
<proteinExistence type="evidence at protein level"/>
<evidence type="ECO:0000255" key="1"/>
<evidence type="ECO:0000269" key="2">
    <source>
    </source>
</evidence>
<evidence type="ECO:0000269" key="3">
    <source>
    </source>
</evidence>
<keyword id="KW-0175">Coiled coil</keyword>
<keyword id="KW-0963">Cytoplasm</keyword>
<keyword id="KW-0469">Meiosis</keyword>
<keyword id="KW-1185">Reference proteome</keyword>
<comment type="function">
    <text evidence="2">Has a role in meiosis.</text>
</comment>
<comment type="subcellular location">
    <subcellularLocation>
        <location evidence="3">Cytoplasm</location>
    </subcellularLocation>
</comment>
<organism>
    <name type="scientific">Schizosaccharomyces pombe (strain 972 / ATCC 24843)</name>
    <name type="common">Fission yeast</name>
    <dbReference type="NCBI Taxonomy" id="284812"/>
    <lineage>
        <taxon>Eukaryota</taxon>
        <taxon>Fungi</taxon>
        <taxon>Dikarya</taxon>
        <taxon>Ascomycota</taxon>
        <taxon>Taphrinomycotina</taxon>
        <taxon>Schizosaccharomycetes</taxon>
        <taxon>Schizosaccharomycetales</taxon>
        <taxon>Schizosaccharomycetaceae</taxon>
        <taxon>Schizosaccharomyces</taxon>
    </lineage>
</organism>
<feature type="chain" id="PRO_0000096289" description="Meiotic coiled-coil protein 3">
    <location>
        <begin position="1"/>
        <end position="952"/>
    </location>
</feature>
<feature type="coiled-coil region" evidence="1">
    <location>
        <begin position="283"/>
        <end position="611"/>
    </location>
</feature>
<feature type="coiled-coil region" evidence="1">
    <location>
        <begin position="684"/>
        <end position="716"/>
    </location>
</feature>
<feature type="coiled-coil region" evidence="1">
    <location>
        <begin position="839"/>
        <end position="942"/>
    </location>
</feature>
<protein>
    <recommendedName>
        <fullName>Meiotic coiled-coil protein 3</fullName>
    </recommendedName>
    <alternativeName>
        <fullName>Meiotically up-regulated gene 7 protein</fullName>
    </alternativeName>
</protein>
<sequence>MTKETHENHLRTHNGIFPVSLLSTQARQLLNFKLKSPSYYLLNSFKLLVKSEGNNQSTTADVTLTKSPNAYHASSAREEKDLQVSRRDTCFYCSRKIIKCICNEEHVGIESVQLKLILLLCQNLPNVTTNAKKYFSSLADGHNFTLTLYKFSLDNQTFSQLLSRFKSFATLTELLQVHNVMLQVNFSFQARQLNTEIQLRRCHSLEKTWKFLFGDYELPDVLKDMESSNSDWSDTSLKRIAYLCSLVEELKLHSSIMNDKYVCLVSKHNNALEDKFNSEAARQLLQKSLSIVASNLKQAENKTISYEEKLSIAQNSINEIQTQNRDLKLETEKLQDQIKALLERNQSLQEALETVKNDEKNLREMNANYETEMKEARQKLNNKEALISHYDDDFRAKELKISRLSESLREKAGLLEFQSSVSEQRDLLYQEQIQSSIKDMENVFRKNEYLMEELNELKNNLEVESSKVLRLDEEMKCLKDEQLSQFDTVFSLTDERDGLQKDLKNTKGNLDDEIGRSAFLKSQIRDQELTIEKLHDSLETLSQTNNSLQCEISEKNAELNSVNSKLSEGRAHLETANKENEILKQQLELSESKLASLLNSYQSFINKKEHLYSFLQLVEPSFAKSDSSNATESQISESVRKGISIFNLLFIVYKNVCSQAGINPSTKLEDLDEHTLSDELTYITKKFVQKDQEYQTKEIELRNYKITLQSLLEDKLIGVNTDCRSPSCSDFEQLGQESENNTSISGRVSKLVKSFNDSSSISNNTKISITKSPSGEKVSVFKEMSDIALRDMDKNRKLLGENVDVRNIVVQKDESLNIDLQNNAVVPELHFKEGMVYDSLENAYTYLAESKRMLANELQMKQEDLEKVILELEAYKEIFLEEKQIPCEEFMPGKNAKSEKSLRSVFQEQLMRETKRVRKLEKVNSELKLHCFELSERLREREHTLQQTFGDK</sequence>
<gene>
    <name type="primary">mcp3</name>
    <name type="synonym">mug7</name>
    <name type="ORF">SPAC1006.04c</name>
</gene>
<dbReference type="EMBL" id="AB189989">
    <property type="protein sequence ID" value="BAD42851.1"/>
    <property type="molecule type" value="Genomic_DNA"/>
</dbReference>
<dbReference type="EMBL" id="CU329670">
    <property type="protein sequence ID" value="CAB60234.1"/>
    <property type="molecule type" value="Genomic_DNA"/>
</dbReference>
<dbReference type="PIR" id="T50451">
    <property type="entry name" value="T50451"/>
</dbReference>
<dbReference type="RefSeq" id="NP_594851.1">
    <property type="nucleotide sequence ID" value="NM_001020280.2"/>
</dbReference>
<dbReference type="SMR" id="Q9UTR7"/>
<dbReference type="STRING" id="284812.Q9UTR7"/>
<dbReference type="iPTMnet" id="Q9UTR7"/>
<dbReference type="PaxDb" id="4896-SPAC1006.04c.1"/>
<dbReference type="EnsemblFungi" id="SPAC1006.04c.1">
    <property type="protein sequence ID" value="SPAC1006.04c.1:pep"/>
    <property type="gene ID" value="SPAC1006.04c"/>
</dbReference>
<dbReference type="GeneID" id="2543146"/>
<dbReference type="KEGG" id="spo:2543146"/>
<dbReference type="PomBase" id="SPAC1006.04c">
    <property type="gene designation" value="mcp3"/>
</dbReference>
<dbReference type="VEuPathDB" id="FungiDB:SPAC1006.04c"/>
<dbReference type="HOGENOM" id="CLU_309527_0_0_1"/>
<dbReference type="InParanoid" id="Q9UTR7"/>
<dbReference type="OMA" id="INYSIIH"/>
<dbReference type="PhylomeDB" id="Q9UTR7"/>
<dbReference type="PRO" id="PR:Q9UTR7"/>
<dbReference type="Proteomes" id="UP000002485">
    <property type="component" value="Chromosome I"/>
</dbReference>
<dbReference type="GO" id="GO:0005737">
    <property type="term" value="C:cytoplasm"/>
    <property type="evidence" value="ECO:0007005"/>
    <property type="project" value="PomBase"/>
</dbReference>
<dbReference type="GO" id="GO:0051321">
    <property type="term" value="P:meiotic cell cycle"/>
    <property type="evidence" value="ECO:0007669"/>
    <property type="project" value="UniProtKB-KW"/>
</dbReference>
<dbReference type="SUPFAM" id="SSF57997">
    <property type="entry name" value="Tropomyosin"/>
    <property type="match status" value="1"/>
</dbReference>